<protein>
    <recommendedName>
        <fullName>ATP synthase subunit b 2</fullName>
    </recommendedName>
    <alternativeName>
        <fullName>ATP synthase F(0) sector subunit b 2</fullName>
    </alternativeName>
    <alternativeName>
        <fullName>ATPase subunit I 2</fullName>
    </alternativeName>
    <alternativeName>
        <fullName>F-type ATPase subunit b 2</fullName>
        <shortName>F-ATPase subunit b 2</shortName>
    </alternativeName>
</protein>
<proteinExistence type="inferred from homology"/>
<comment type="function">
    <text evidence="1">F(1)F(0) ATP synthase produces ATP from ADP in the presence of a proton or sodium gradient. F-type ATPases consist of two structural domains, F(1) containing the extramembraneous catalytic core and F(0) containing the membrane proton channel, linked together by a central stalk and a peripheral stalk. During catalysis, ATP synthesis in the catalytic domain of F(1) is coupled via a rotary mechanism of the central stalk subunits to proton translocation (By similarity).</text>
</comment>
<comment type="function">
    <text evidence="1">Component of the F(0) channel, it forms part of the peripheral stalk, linking F(1) to F(0). The b'-subunit is a diverged and duplicated form of b found in plants and photosynthetic bacteria (By similarity).</text>
</comment>
<comment type="subunit">
    <text evidence="1">F-type ATPases have 2 components, F(1) - the catalytic core - and F(0) - the membrane proton channel. F(1) has five subunits: alpha(3), beta(3), gamma(1), delta(1), epsilon(1). F(0) has three main subunits: a(1), b(2) and c(10-14). The alpha and beta chains form an alternating ring which encloses part of the gamma chain. F(1) is attached to F(0) by a central stalk formed by the gamma and epsilon chains, while a peripheral stalk is formed by the delta and b chains (By similarity).</text>
</comment>
<comment type="subcellular location">
    <subcellularLocation>
        <location evidence="1">Cell inner membrane</location>
        <topology evidence="1">Single-pass membrane protein</topology>
    </subcellularLocation>
</comment>
<comment type="similarity">
    <text evidence="3">Belongs to the ATPase B chain family.</text>
</comment>
<sequence>MPQFDPSSFPSQIVWLVIALVAMYFVMSRLAIPRLAEVLEQRQRLINDDLKQAEALKAETEAAIAAYETALAEARARAHDEIRAVTEAAAKAAEARNAEVAKALNTRIKDGEARIVQARDEALTHVREVAGAVASDIVGKLAGLRVDDAALTAAVAAAIKE</sequence>
<evidence type="ECO:0000250" key="1"/>
<evidence type="ECO:0000255" key="2"/>
<evidence type="ECO:0000305" key="3"/>
<organism>
    <name type="scientific">Rhodospirillum rubrum (strain ATCC 11170 / ATH 1.1.1 / DSM 467 / LMG 4362 / NCIMB 8255 / S1)</name>
    <dbReference type="NCBI Taxonomy" id="269796"/>
    <lineage>
        <taxon>Bacteria</taxon>
        <taxon>Pseudomonadati</taxon>
        <taxon>Pseudomonadota</taxon>
        <taxon>Alphaproteobacteria</taxon>
        <taxon>Rhodospirillales</taxon>
        <taxon>Rhodospirillaceae</taxon>
        <taxon>Rhodospirillum</taxon>
    </lineage>
</organism>
<name>ATPF2_RHORT</name>
<keyword id="KW-0066">ATP synthesis</keyword>
<keyword id="KW-0997">Cell inner membrane</keyword>
<keyword id="KW-1003">Cell membrane</keyword>
<keyword id="KW-0138">CF(0)</keyword>
<keyword id="KW-0375">Hydrogen ion transport</keyword>
<keyword id="KW-0406">Ion transport</keyword>
<keyword id="KW-0472">Membrane</keyword>
<keyword id="KW-1185">Reference proteome</keyword>
<keyword id="KW-0812">Transmembrane</keyword>
<keyword id="KW-1133">Transmembrane helix</keyword>
<keyword id="KW-0813">Transport</keyword>
<feature type="chain" id="PRO_0000369046" description="ATP synthase subunit b 2">
    <location>
        <begin position="1"/>
        <end position="161"/>
    </location>
</feature>
<feature type="transmembrane region" description="Helical" evidence="2">
    <location>
        <begin position="13"/>
        <end position="33"/>
    </location>
</feature>
<dbReference type="EMBL" id="CP000230">
    <property type="protein sequence ID" value="ABC24039.1"/>
    <property type="molecule type" value="Genomic_DNA"/>
</dbReference>
<dbReference type="RefSeq" id="WP_011390992.1">
    <property type="nucleotide sequence ID" value="NC_007643.1"/>
</dbReference>
<dbReference type="RefSeq" id="YP_428326.1">
    <property type="nucleotide sequence ID" value="NC_007643.1"/>
</dbReference>
<dbReference type="SMR" id="Q2RPA6"/>
<dbReference type="STRING" id="269796.Rru_A3244"/>
<dbReference type="EnsemblBacteria" id="ABC24039">
    <property type="protein sequence ID" value="ABC24039"/>
    <property type="gene ID" value="Rru_A3244"/>
</dbReference>
<dbReference type="KEGG" id="rru:Rru_A3244"/>
<dbReference type="PATRIC" id="fig|269796.9.peg.3358"/>
<dbReference type="eggNOG" id="COG0711">
    <property type="taxonomic scope" value="Bacteria"/>
</dbReference>
<dbReference type="HOGENOM" id="CLU_079215_1_0_5"/>
<dbReference type="PhylomeDB" id="Q2RPA6"/>
<dbReference type="Proteomes" id="UP000001929">
    <property type="component" value="Chromosome"/>
</dbReference>
<dbReference type="GO" id="GO:0005886">
    <property type="term" value="C:plasma membrane"/>
    <property type="evidence" value="ECO:0007669"/>
    <property type="project" value="UniProtKB-SubCell"/>
</dbReference>
<dbReference type="GO" id="GO:0045259">
    <property type="term" value="C:proton-transporting ATP synthase complex"/>
    <property type="evidence" value="ECO:0007669"/>
    <property type="project" value="UniProtKB-KW"/>
</dbReference>
<dbReference type="GO" id="GO:0046933">
    <property type="term" value="F:proton-transporting ATP synthase activity, rotational mechanism"/>
    <property type="evidence" value="ECO:0007669"/>
    <property type="project" value="UniProtKB-UniRule"/>
</dbReference>
<dbReference type="GO" id="GO:0046961">
    <property type="term" value="F:proton-transporting ATPase activity, rotational mechanism"/>
    <property type="evidence" value="ECO:0007669"/>
    <property type="project" value="TreeGrafter"/>
</dbReference>
<dbReference type="CDD" id="cd06503">
    <property type="entry name" value="ATP-synt_Fo_b"/>
    <property type="match status" value="1"/>
</dbReference>
<dbReference type="HAMAP" id="MF_01398">
    <property type="entry name" value="ATP_synth_b_bprime"/>
    <property type="match status" value="1"/>
</dbReference>
<dbReference type="InterPro" id="IPR002146">
    <property type="entry name" value="ATP_synth_b/b'su_bac/chlpt"/>
</dbReference>
<dbReference type="InterPro" id="IPR050059">
    <property type="entry name" value="ATP_synthase_B_chain"/>
</dbReference>
<dbReference type="PANTHER" id="PTHR33445:SF1">
    <property type="entry name" value="ATP SYNTHASE SUBUNIT B"/>
    <property type="match status" value="1"/>
</dbReference>
<dbReference type="PANTHER" id="PTHR33445">
    <property type="entry name" value="ATP SYNTHASE SUBUNIT B', CHLOROPLASTIC"/>
    <property type="match status" value="1"/>
</dbReference>
<dbReference type="Pfam" id="PF00430">
    <property type="entry name" value="ATP-synt_B"/>
    <property type="match status" value="1"/>
</dbReference>
<reference key="1">
    <citation type="journal article" date="2011" name="Stand. Genomic Sci.">
        <title>Complete genome sequence of Rhodospirillum rubrum type strain (S1).</title>
        <authorList>
            <person name="Munk A.C."/>
            <person name="Copeland A."/>
            <person name="Lucas S."/>
            <person name="Lapidus A."/>
            <person name="Del Rio T.G."/>
            <person name="Barry K."/>
            <person name="Detter J.C."/>
            <person name="Hammon N."/>
            <person name="Israni S."/>
            <person name="Pitluck S."/>
            <person name="Brettin T."/>
            <person name="Bruce D."/>
            <person name="Han C."/>
            <person name="Tapia R."/>
            <person name="Gilna P."/>
            <person name="Schmutz J."/>
            <person name="Larimer F."/>
            <person name="Land M."/>
            <person name="Kyrpides N.C."/>
            <person name="Mavromatis K."/>
            <person name="Richardson P."/>
            <person name="Rohde M."/>
            <person name="Goeker M."/>
            <person name="Klenk H.P."/>
            <person name="Zhang Y."/>
            <person name="Roberts G.P."/>
            <person name="Reslewic S."/>
            <person name="Schwartz D.C."/>
        </authorList>
    </citation>
    <scope>NUCLEOTIDE SEQUENCE [LARGE SCALE GENOMIC DNA]</scope>
    <source>
        <strain>ATCC 11170 / ATH 1.1.1 / DSM 467 / LMG 4362 / NCIMB 8255 / S1</strain>
    </source>
</reference>
<accession>Q2RPA6</accession>
<gene>
    <name type="primary">atpF2</name>
    <name type="synonym">atpG</name>
    <name type="ordered locus">Rru_A3244</name>
</gene>